<comment type="function">
    <text evidence="1">Allows the formation of correctly charged Gln-tRNA(Gln) through the transamidation of misacylated Glu-tRNA(Gln) in organisms which lack glutaminyl-tRNA synthetase. The reaction takes place in the presence of glutamine and ATP through an activated gamma-phospho-Glu-tRNA(Gln).</text>
</comment>
<comment type="catalytic activity">
    <reaction evidence="1">
        <text>L-glutamyl-tRNA(Gln) + L-glutamine + ATP + H2O = L-glutaminyl-tRNA(Gln) + L-glutamate + ADP + phosphate + H(+)</text>
        <dbReference type="Rhea" id="RHEA:17521"/>
        <dbReference type="Rhea" id="RHEA-COMP:9681"/>
        <dbReference type="Rhea" id="RHEA-COMP:9684"/>
        <dbReference type="ChEBI" id="CHEBI:15377"/>
        <dbReference type="ChEBI" id="CHEBI:15378"/>
        <dbReference type="ChEBI" id="CHEBI:29985"/>
        <dbReference type="ChEBI" id="CHEBI:30616"/>
        <dbReference type="ChEBI" id="CHEBI:43474"/>
        <dbReference type="ChEBI" id="CHEBI:58359"/>
        <dbReference type="ChEBI" id="CHEBI:78520"/>
        <dbReference type="ChEBI" id="CHEBI:78521"/>
        <dbReference type="ChEBI" id="CHEBI:456216"/>
        <dbReference type="EC" id="6.3.5.7"/>
    </reaction>
</comment>
<comment type="subunit">
    <text evidence="1">Heterotrimer of A, B and C subunits.</text>
</comment>
<comment type="similarity">
    <text evidence="1">Belongs to the amidase family. GatA subfamily.</text>
</comment>
<reference key="1">
    <citation type="journal article" date="2003" name="Nature">
        <title>Unique physiological and pathogenic features of Leptospira interrogans revealed by whole-genome sequencing.</title>
        <authorList>
            <person name="Ren S.-X."/>
            <person name="Fu G."/>
            <person name="Jiang X.-G."/>
            <person name="Zeng R."/>
            <person name="Miao Y.-G."/>
            <person name="Xu H."/>
            <person name="Zhang Y.-X."/>
            <person name="Xiong H."/>
            <person name="Lu G."/>
            <person name="Lu L.-F."/>
            <person name="Jiang H.-Q."/>
            <person name="Jia J."/>
            <person name="Tu Y.-F."/>
            <person name="Jiang J.-X."/>
            <person name="Gu W.-Y."/>
            <person name="Zhang Y.-Q."/>
            <person name="Cai Z."/>
            <person name="Sheng H.-H."/>
            <person name="Yin H.-F."/>
            <person name="Zhang Y."/>
            <person name="Zhu G.-F."/>
            <person name="Wan M."/>
            <person name="Huang H.-L."/>
            <person name="Qian Z."/>
            <person name="Wang S.-Y."/>
            <person name="Ma W."/>
            <person name="Yao Z.-J."/>
            <person name="Shen Y."/>
            <person name="Qiang B.-Q."/>
            <person name="Xia Q.-C."/>
            <person name="Guo X.-K."/>
            <person name="Danchin A."/>
            <person name="Saint Girons I."/>
            <person name="Somerville R.L."/>
            <person name="Wen Y.-M."/>
            <person name="Shi M.-H."/>
            <person name="Chen Z."/>
            <person name="Xu J.-G."/>
            <person name="Zhao G.-P."/>
        </authorList>
    </citation>
    <scope>NUCLEOTIDE SEQUENCE [LARGE SCALE GENOMIC DNA]</scope>
    <source>
        <strain>56601</strain>
    </source>
</reference>
<name>GATA_LEPIN</name>
<proteinExistence type="inferred from homology"/>
<sequence>MNEILKKSYVELKDSLNSGKISSTELVSACINRIREVDGAVKAFLYLDEKKVLNSAEESDKRRKEGKPLSEFDGMPVAIKDNICIRDTITSCSSKILENYKSPFHATVVEKLLEKGFILFPRTNMDEFAMGSSTENSAFQTTRNPFDLERIPGGSSGGSAAAVAASMVPLALGSDTGGSVRQPASLCGLYGLKPTYGTVSRYGLVAYASSLDQIGPFSRELQGCIDLYSVISGKDVRDSTSIHRPKFSASDVQPQDFKGLKVGVIKMTPEIQSEVVKSYDKVLNQLKEKGATLVDLDFSKFGFAIPIYYIIATAECSSNLSRFDGIRFGSRKDKTGKLEDLFVDSRTEGFGPEVKRRILLGTFSLSAGYYDAYYGTAQKARALIRKEYESFFSKVDCILQPTSPTTAFKIGEKTKDPIQMYKADIWTTSVNLAGLPAMSVPMGADQKGLPIGLQITTPHFQEGKLFGIALALSTLEGMNIQFPESIK</sequence>
<feature type="chain" id="PRO_0000105172" description="Glutamyl-tRNA(Gln) amidotransferase subunit A">
    <location>
        <begin position="1"/>
        <end position="487"/>
    </location>
</feature>
<feature type="active site" description="Charge relay system" evidence="1">
    <location>
        <position position="80"/>
    </location>
</feature>
<feature type="active site" description="Charge relay system" evidence="1">
    <location>
        <position position="155"/>
    </location>
</feature>
<feature type="active site" description="Acyl-ester intermediate" evidence="1">
    <location>
        <position position="179"/>
    </location>
</feature>
<accession>Q8F3A1</accession>
<evidence type="ECO:0000255" key="1">
    <source>
        <dbReference type="HAMAP-Rule" id="MF_00120"/>
    </source>
</evidence>
<keyword id="KW-0067">ATP-binding</keyword>
<keyword id="KW-0436">Ligase</keyword>
<keyword id="KW-0547">Nucleotide-binding</keyword>
<keyword id="KW-0648">Protein biosynthesis</keyword>
<keyword id="KW-1185">Reference proteome</keyword>
<dbReference type="EC" id="6.3.5.7" evidence="1"/>
<dbReference type="EMBL" id="AE010300">
    <property type="protein sequence ID" value="AAN49706.1"/>
    <property type="molecule type" value="Genomic_DNA"/>
</dbReference>
<dbReference type="RefSeq" id="NP_712688.1">
    <property type="nucleotide sequence ID" value="NC_004342.2"/>
</dbReference>
<dbReference type="RefSeq" id="WP_001002775.1">
    <property type="nucleotide sequence ID" value="NC_004342.2"/>
</dbReference>
<dbReference type="SMR" id="Q8F3A1"/>
<dbReference type="STRING" id="189518.LA_2507"/>
<dbReference type="PaxDb" id="189518-LA_2507"/>
<dbReference type="EnsemblBacteria" id="AAN49706">
    <property type="protein sequence ID" value="AAN49706"/>
    <property type="gene ID" value="LA_2507"/>
</dbReference>
<dbReference type="KEGG" id="lil:LA_2507"/>
<dbReference type="PATRIC" id="fig|189518.3.peg.2489"/>
<dbReference type="HOGENOM" id="CLU_009600_0_3_12"/>
<dbReference type="InParanoid" id="Q8F3A1"/>
<dbReference type="OrthoDB" id="9811471at2"/>
<dbReference type="Proteomes" id="UP000001408">
    <property type="component" value="Chromosome I"/>
</dbReference>
<dbReference type="GO" id="GO:0030956">
    <property type="term" value="C:glutamyl-tRNA(Gln) amidotransferase complex"/>
    <property type="evidence" value="ECO:0007669"/>
    <property type="project" value="InterPro"/>
</dbReference>
<dbReference type="GO" id="GO:0005524">
    <property type="term" value="F:ATP binding"/>
    <property type="evidence" value="ECO:0007669"/>
    <property type="project" value="UniProtKB-KW"/>
</dbReference>
<dbReference type="GO" id="GO:0050567">
    <property type="term" value="F:glutaminyl-tRNA synthase (glutamine-hydrolyzing) activity"/>
    <property type="evidence" value="ECO:0007669"/>
    <property type="project" value="UniProtKB-UniRule"/>
</dbReference>
<dbReference type="GO" id="GO:0006412">
    <property type="term" value="P:translation"/>
    <property type="evidence" value="ECO:0007669"/>
    <property type="project" value="UniProtKB-UniRule"/>
</dbReference>
<dbReference type="Gene3D" id="3.90.1300.10">
    <property type="entry name" value="Amidase signature (AS) domain"/>
    <property type="match status" value="1"/>
</dbReference>
<dbReference type="HAMAP" id="MF_00120">
    <property type="entry name" value="GatA"/>
    <property type="match status" value="1"/>
</dbReference>
<dbReference type="InterPro" id="IPR000120">
    <property type="entry name" value="Amidase"/>
</dbReference>
<dbReference type="InterPro" id="IPR020556">
    <property type="entry name" value="Amidase_CS"/>
</dbReference>
<dbReference type="InterPro" id="IPR023631">
    <property type="entry name" value="Amidase_dom"/>
</dbReference>
<dbReference type="InterPro" id="IPR036928">
    <property type="entry name" value="AS_sf"/>
</dbReference>
<dbReference type="InterPro" id="IPR004412">
    <property type="entry name" value="GatA"/>
</dbReference>
<dbReference type="NCBIfam" id="TIGR00132">
    <property type="entry name" value="gatA"/>
    <property type="match status" value="1"/>
</dbReference>
<dbReference type="PANTHER" id="PTHR11895:SF151">
    <property type="entry name" value="GLUTAMYL-TRNA(GLN) AMIDOTRANSFERASE SUBUNIT A"/>
    <property type="match status" value="1"/>
</dbReference>
<dbReference type="PANTHER" id="PTHR11895">
    <property type="entry name" value="TRANSAMIDASE"/>
    <property type="match status" value="1"/>
</dbReference>
<dbReference type="Pfam" id="PF01425">
    <property type="entry name" value="Amidase"/>
    <property type="match status" value="1"/>
</dbReference>
<dbReference type="SUPFAM" id="SSF75304">
    <property type="entry name" value="Amidase signature (AS) enzymes"/>
    <property type="match status" value="1"/>
</dbReference>
<dbReference type="PROSITE" id="PS00571">
    <property type="entry name" value="AMIDASES"/>
    <property type="match status" value="1"/>
</dbReference>
<protein>
    <recommendedName>
        <fullName evidence="1">Glutamyl-tRNA(Gln) amidotransferase subunit A</fullName>
        <shortName evidence="1">Glu-ADT subunit A</shortName>
        <ecNumber evidence="1">6.3.5.7</ecNumber>
    </recommendedName>
</protein>
<organism>
    <name type="scientific">Leptospira interrogans serogroup Icterohaemorrhagiae serovar Lai (strain 56601)</name>
    <dbReference type="NCBI Taxonomy" id="189518"/>
    <lineage>
        <taxon>Bacteria</taxon>
        <taxon>Pseudomonadati</taxon>
        <taxon>Spirochaetota</taxon>
        <taxon>Spirochaetia</taxon>
        <taxon>Leptospirales</taxon>
        <taxon>Leptospiraceae</taxon>
        <taxon>Leptospira</taxon>
    </lineage>
</organism>
<gene>
    <name evidence="1" type="primary">gatA</name>
    <name type="ordered locus">LA_2507</name>
</gene>